<reference key="1">
    <citation type="journal article" date="2008" name="PLoS ONE">
        <title>Genome sequence of Brucella abortus vaccine strain S19 compared to virulent strains yields candidate virulence genes.</title>
        <authorList>
            <person name="Crasta O.R."/>
            <person name="Folkerts O."/>
            <person name="Fei Z."/>
            <person name="Mane S.P."/>
            <person name="Evans C."/>
            <person name="Martino-Catt S."/>
            <person name="Bricker B."/>
            <person name="Yu G."/>
            <person name="Du L."/>
            <person name="Sobral B.W."/>
        </authorList>
    </citation>
    <scope>NUCLEOTIDE SEQUENCE [LARGE SCALE GENOMIC DNA]</scope>
    <source>
        <strain>S19</strain>
    </source>
</reference>
<protein>
    <recommendedName>
        <fullName evidence="1">Adenylate kinase</fullName>
        <shortName evidence="1">AK</shortName>
        <ecNumber evidence="1">2.7.4.3</ecNumber>
    </recommendedName>
    <alternativeName>
        <fullName evidence="1">ATP-AMP transphosphorylase</fullName>
    </alternativeName>
    <alternativeName>
        <fullName evidence="1">ATP:AMP phosphotransferase</fullName>
    </alternativeName>
    <alternativeName>
        <fullName evidence="1">Adenylate monophosphate kinase</fullName>
    </alternativeName>
</protein>
<gene>
    <name evidence="1" type="primary">adk</name>
    <name type="ordered locus">BAbS19_I11500</name>
</gene>
<comment type="function">
    <text evidence="1">Catalyzes the reversible transfer of the terminal phosphate group between ATP and AMP. Plays an important role in cellular energy homeostasis and in adenine nucleotide metabolism.</text>
</comment>
<comment type="catalytic activity">
    <reaction evidence="1">
        <text>AMP + ATP = 2 ADP</text>
        <dbReference type="Rhea" id="RHEA:12973"/>
        <dbReference type="ChEBI" id="CHEBI:30616"/>
        <dbReference type="ChEBI" id="CHEBI:456215"/>
        <dbReference type="ChEBI" id="CHEBI:456216"/>
        <dbReference type="EC" id="2.7.4.3"/>
    </reaction>
</comment>
<comment type="pathway">
    <text evidence="1">Purine metabolism; AMP biosynthesis via salvage pathway; AMP from ADP: step 1/1.</text>
</comment>
<comment type="subunit">
    <text evidence="1">Monomer.</text>
</comment>
<comment type="subcellular location">
    <subcellularLocation>
        <location evidence="1">Cytoplasm</location>
    </subcellularLocation>
</comment>
<comment type="domain">
    <text evidence="1">Consists of three domains, a large central CORE domain and two small peripheral domains, NMPbind and LID, which undergo movements during catalysis. The LID domain closes over the site of phosphoryl transfer upon ATP binding. Assembling and dissambling the active center during each catalytic cycle provides an effective means to prevent ATP hydrolysis.</text>
</comment>
<comment type="similarity">
    <text evidence="1">Belongs to the adenylate kinase family.</text>
</comment>
<sequence>MRLILLGPPGAGKGTQAGLLTKKHGIPQLSTGDMLRAAVAQQSEIGKRAKAVMDAGQLVSDEIVNQIVSERIDAPDCANGFILDGYPRTVPQAQALSQMLSGKGLKLDAVIELKVDENALVKRMESRVAETIAKGGQVRSDDNPEAFRKRLVEYREKTAPLSSYYAGTGELRIINGMAPVEEVTAEIERILVPA</sequence>
<keyword id="KW-0067">ATP-binding</keyword>
<keyword id="KW-0963">Cytoplasm</keyword>
<keyword id="KW-0418">Kinase</keyword>
<keyword id="KW-0545">Nucleotide biosynthesis</keyword>
<keyword id="KW-0547">Nucleotide-binding</keyword>
<keyword id="KW-0808">Transferase</keyword>
<name>KAD_BRUA1</name>
<proteinExistence type="inferred from homology"/>
<evidence type="ECO:0000255" key="1">
    <source>
        <dbReference type="HAMAP-Rule" id="MF_00235"/>
    </source>
</evidence>
<accession>B2S658</accession>
<organism>
    <name type="scientific">Brucella abortus (strain S19)</name>
    <dbReference type="NCBI Taxonomy" id="430066"/>
    <lineage>
        <taxon>Bacteria</taxon>
        <taxon>Pseudomonadati</taxon>
        <taxon>Pseudomonadota</taxon>
        <taxon>Alphaproteobacteria</taxon>
        <taxon>Hyphomicrobiales</taxon>
        <taxon>Brucellaceae</taxon>
        <taxon>Brucella/Ochrobactrum group</taxon>
        <taxon>Brucella</taxon>
    </lineage>
</organism>
<dbReference type="EC" id="2.7.4.3" evidence="1"/>
<dbReference type="EMBL" id="CP000887">
    <property type="protein sequence ID" value="ACD72655.1"/>
    <property type="molecule type" value="Genomic_DNA"/>
</dbReference>
<dbReference type="RefSeq" id="WP_002964341.1">
    <property type="nucleotide sequence ID" value="NC_010742.1"/>
</dbReference>
<dbReference type="SMR" id="B2S658"/>
<dbReference type="KEGG" id="bmc:BAbS19_I11500"/>
<dbReference type="HOGENOM" id="CLU_032354_4_1_5"/>
<dbReference type="UniPathway" id="UPA00588">
    <property type="reaction ID" value="UER00649"/>
</dbReference>
<dbReference type="Proteomes" id="UP000002565">
    <property type="component" value="Chromosome 1"/>
</dbReference>
<dbReference type="GO" id="GO:0005737">
    <property type="term" value="C:cytoplasm"/>
    <property type="evidence" value="ECO:0007669"/>
    <property type="project" value="UniProtKB-SubCell"/>
</dbReference>
<dbReference type="GO" id="GO:0004017">
    <property type="term" value="F:adenylate kinase activity"/>
    <property type="evidence" value="ECO:0007669"/>
    <property type="project" value="UniProtKB-UniRule"/>
</dbReference>
<dbReference type="GO" id="GO:0005524">
    <property type="term" value="F:ATP binding"/>
    <property type="evidence" value="ECO:0007669"/>
    <property type="project" value="UniProtKB-UniRule"/>
</dbReference>
<dbReference type="GO" id="GO:0044209">
    <property type="term" value="P:AMP salvage"/>
    <property type="evidence" value="ECO:0007669"/>
    <property type="project" value="UniProtKB-UniRule"/>
</dbReference>
<dbReference type="CDD" id="cd01428">
    <property type="entry name" value="ADK"/>
    <property type="match status" value="1"/>
</dbReference>
<dbReference type="Gene3D" id="3.40.50.300">
    <property type="entry name" value="P-loop containing nucleotide triphosphate hydrolases"/>
    <property type="match status" value="1"/>
</dbReference>
<dbReference type="HAMAP" id="MF_00235">
    <property type="entry name" value="Adenylate_kinase_Adk"/>
    <property type="match status" value="1"/>
</dbReference>
<dbReference type="InterPro" id="IPR006259">
    <property type="entry name" value="Adenyl_kin_sub"/>
</dbReference>
<dbReference type="InterPro" id="IPR000850">
    <property type="entry name" value="Adenylat/UMP-CMP_kin"/>
</dbReference>
<dbReference type="InterPro" id="IPR033690">
    <property type="entry name" value="Adenylat_kinase_CS"/>
</dbReference>
<dbReference type="InterPro" id="IPR027417">
    <property type="entry name" value="P-loop_NTPase"/>
</dbReference>
<dbReference type="NCBIfam" id="TIGR01351">
    <property type="entry name" value="adk"/>
    <property type="match status" value="1"/>
</dbReference>
<dbReference type="NCBIfam" id="NF001381">
    <property type="entry name" value="PRK00279.1-3"/>
    <property type="match status" value="1"/>
</dbReference>
<dbReference type="NCBIfam" id="NF011100">
    <property type="entry name" value="PRK14527.1"/>
    <property type="match status" value="1"/>
</dbReference>
<dbReference type="NCBIfam" id="NF011101">
    <property type="entry name" value="PRK14528.1"/>
    <property type="match status" value="1"/>
</dbReference>
<dbReference type="NCBIfam" id="NF011104">
    <property type="entry name" value="PRK14531.1"/>
    <property type="match status" value="1"/>
</dbReference>
<dbReference type="NCBIfam" id="NF011105">
    <property type="entry name" value="PRK14532.1"/>
    <property type="match status" value="1"/>
</dbReference>
<dbReference type="PANTHER" id="PTHR23359">
    <property type="entry name" value="NUCLEOTIDE KINASE"/>
    <property type="match status" value="1"/>
</dbReference>
<dbReference type="Pfam" id="PF00406">
    <property type="entry name" value="ADK"/>
    <property type="match status" value="1"/>
</dbReference>
<dbReference type="PRINTS" id="PR00094">
    <property type="entry name" value="ADENYLTKNASE"/>
</dbReference>
<dbReference type="SUPFAM" id="SSF52540">
    <property type="entry name" value="P-loop containing nucleoside triphosphate hydrolases"/>
    <property type="match status" value="1"/>
</dbReference>
<dbReference type="PROSITE" id="PS00113">
    <property type="entry name" value="ADENYLATE_KINASE"/>
    <property type="match status" value="1"/>
</dbReference>
<feature type="chain" id="PRO_1000100534" description="Adenylate kinase">
    <location>
        <begin position="1"/>
        <end position="194"/>
    </location>
</feature>
<feature type="region of interest" description="NMP" evidence="1">
    <location>
        <begin position="30"/>
        <end position="59"/>
    </location>
</feature>
<feature type="region of interest" description="LID" evidence="1">
    <location>
        <begin position="126"/>
        <end position="142"/>
    </location>
</feature>
<feature type="binding site" evidence="1">
    <location>
        <begin position="10"/>
        <end position="15"/>
    </location>
    <ligand>
        <name>ATP</name>
        <dbReference type="ChEBI" id="CHEBI:30616"/>
    </ligand>
</feature>
<feature type="binding site" evidence="1">
    <location>
        <position position="31"/>
    </location>
    <ligand>
        <name>AMP</name>
        <dbReference type="ChEBI" id="CHEBI:456215"/>
    </ligand>
</feature>
<feature type="binding site" evidence="1">
    <location>
        <position position="36"/>
    </location>
    <ligand>
        <name>AMP</name>
        <dbReference type="ChEBI" id="CHEBI:456215"/>
    </ligand>
</feature>
<feature type="binding site" evidence="1">
    <location>
        <begin position="57"/>
        <end position="59"/>
    </location>
    <ligand>
        <name>AMP</name>
        <dbReference type="ChEBI" id="CHEBI:456215"/>
    </ligand>
</feature>
<feature type="binding site" evidence="1">
    <location>
        <begin position="85"/>
        <end position="88"/>
    </location>
    <ligand>
        <name>AMP</name>
        <dbReference type="ChEBI" id="CHEBI:456215"/>
    </ligand>
</feature>
<feature type="binding site" evidence="1">
    <location>
        <position position="92"/>
    </location>
    <ligand>
        <name>AMP</name>
        <dbReference type="ChEBI" id="CHEBI:456215"/>
    </ligand>
</feature>
<feature type="binding site" evidence="1">
    <location>
        <position position="127"/>
    </location>
    <ligand>
        <name>ATP</name>
        <dbReference type="ChEBI" id="CHEBI:30616"/>
    </ligand>
</feature>
<feature type="binding site" evidence="1">
    <location>
        <position position="139"/>
    </location>
    <ligand>
        <name>AMP</name>
        <dbReference type="ChEBI" id="CHEBI:456215"/>
    </ligand>
</feature>
<feature type="binding site" evidence="1">
    <location>
        <position position="150"/>
    </location>
    <ligand>
        <name>AMP</name>
        <dbReference type="ChEBI" id="CHEBI:456215"/>
    </ligand>
</feature>
<feature type="binding site" evidence="1">
    <location>
        <position position="178"/>
    </location>
    <ligand>
        <name>ATP</name>
        <dbReference type="ChEBI" id="CHEBI:30616"/>
    </ligand>
</feature>